<name>COAD_SYNJA</name>
<dbReference type="EC" id="2.7.7.3" evidence="1"/>
<dbReference type="EMBL" id="CP000239">
    <property type="protein sequence ID" value="ABD00792.1"/>
    <property type="molecule type" value="Genomic_DNA"/>
</dbReference>
<dbReference type="RefSeq" id="WP_011431463.1">
    <property type="nucleotide sequence ID" value="NC_007775.1"/>
</dbReference>
<dbReference type="SMR" id="Q2JRG2"/>
<dbReference type="STRING" id="321327.CYA_2681"/>
<dbReference type="KEGG" id="cya:CYA_2681"/>
<dbReference type="eggNOG" id="COG0669">
    <property type="taxonomic scope" value="Bacteria"/>
</dbReference>
<dbReference type="HOGENOM" id="CLU_100149_0_1_3"/>
<dbReference type="OrthoDB" id="9806661at2"/>
<dbReference type="UniPathway" id="UPA00241">
    <property type="reaction ID" value="UER00355"/>
</dbReference>
<dbReference type="Proteomes" id="UP000008818">
    <property type="component" value="Chromosome"/>
</dbReference>
<dbReference type="GO" id="GO:0005737">
    <property type="term" value="C:cytoplasm"/>
    <property type="evidence" value="ECO:0007669"/>
    <property type="project" value="UniProtKB-SubCell"/>
</dbReference>
<dbReference type="GO" id="GO:0005524">
    <property type="term" value="F:ATP binding"/>
    <property type="evidence" value="ECO:0007669"/>
    <property type="project" value="UniProtKB-KW"/>
</dbReference>
<dbReference type="GO" id="GO:0004595">
    <property type="term" value="F:pantetheine-phosphate adenylyltransferase activity"/>
    <property type="evidence" value="ECO:0007669"/>
    <property type="project" value="UniProtKB-UniRule"/>
</dbReference>
<dbReference type="GO" id="GO:0015937">
    <property type="term" value="P:coenzyme A biosynthetic process"/>
    <property type="evidence" value="ECO:0007669"/>
    <property type="project" value="UniProtKB-UniRule"/>
</dbReference>
<dbReference type="CDD" id="cd02163">
    <property type="entry name" value="PPAT"/>
    <property type="match status" value="1"/>
</dbReference>
<dbReference type="Gene3D" id="3.40.50.620">
    <property type="entry name" value="HUPs"/>
    <property type="match status" value="1"/>
</dbReference>
<dbReference type="HAMAP" id="MF_00151">
    <property type="entry name" value="PPAT_bact"/>
    <property type="match status" value="1"/>
</dbReference>
<dbReference type="InterPro" id="IPR004821">
    <property type="entry name" value="Cyt_trans-like"/>
</dbReference>
<dbReference type="InterPro" id="IPR001980">
    <property type="entry name" value="PPAT"/>
</dbReference>
<dbReference type="InterPro" id="IPR014729">
    <property type="entry name" value="Rossmann-like_a/b/a_fold"/>
</dbReference>
<dbReference type="NCBIfam" id="TIGR01510">
    <property type="entry name" value="coaD_prev_kdtB"/>
    <property type="match status" value="1"/>
</dbReference>
<dbReference type="NCBIfam" id="TIGR00125">
    <property type="entry name" value="cyt_tran_rel"/>
    <property type="match status" value="1"/>
</dbReference>
<dbReference type="PANTHER" id="PTHR21342">
    <property type="entry name" value="PHOSPHOPANTETHEINE ADENYLYLTRANSFERASE"/>
    <property type="match status" value="1"/>
</dbReference>
<dbReference type="PANTHER" id="PTHR21342:SF1">
    <property type="entry name" value="PHOSPHOPANTETHEINE ADENYLYLTRANSFERASE"/>
    <property type="match status" value="1"/>
</dbReference>
<dbReference type="Pfam" id="PF01467">
    <property type="entry name" value="CTP_transf_like"/>
    <property type="match status" value="1"/>
</dbReference>
<dbReference type="PRINTS" id="PR01020">
    <property type="entry name" value="LPSBIOSNTHSS"/>
</dbReference>
<dbReference type="SUPFAM" id="SSF52374">
    <property type="entry name" value="Nucleotidylyl transferase"/>
    <property type="match status" value="1"/>
</dbReference>
<accession>Q2JRG2</accession>
<protein>
    <recommendedName>
        <fullName evidence="1">Phosphopantetheine adenylyltransferase</fullName>
        <ecNumber evidence="1">2.7.7.3</ecNumber>
    </recommendedName>
    <alternativeName>
        <fullName evidence="1">Dephospho-CoA pyrophosphorylase</fullName>
    </alternativeName>
    <alternativeName>
        <fullName evidence="1">Pantetheine-phosphate adenylyltransferase</fullName>
        <shortName evidence="1">PPAT</shortName>
    </alternativeName>
</protein>
<gene>
    <name evidence="1" type="primary">coaD</name>
    <name type="ordered locus">CYA_2681</name>
</gene>
<feature type="chain" id="PRO_1000011260" description="Phosphopantetheine adenylyltransferase">
    <location>
        <begin position="1"/>
        <end position="159"/>
    </location>
</feature>
<feature type="binding site" evidence="1">
    <location>
        <begin position="8"/>
        <end position="9"/>
    </location>
    <ligand>
        <name>ATP</name>
        <dbReference type="ChEBI" id="CHEBI:30616"/>
    </ligand>
</feature>
<feature type="binding site" evidence="1">
    <location>
        <position position="8"/>
    </location>
    <ligand>
        <name>substrate</name>
    </ligand>
</feature>
<feature type="binding site" evidence="1">
    <location>
        <position position="16"/>
    </location>
    <ligand>
        <name>ATP</name>
        <dbReference type="ChEBI" id="CHEBI:30616"/>
    </ligand>
</feature>
<feature type="binding site" evidence="1">
    <location>
        <position position="40"/>
    </location>
    <ligand>
        <name>substrate</name>
    </ligand>
</feature>
<feature type="binding site" evidence="1">
    <location>
        <position position="72"/>
    </location>
    <ligand>
        <name>substrate</name>
    </ligand>
</feature>
<feature type="binding site" evidence="1">
    <location>
        <position position="86"/>
    </location>
    <ligand>
        <name>substrate</name>
    </ligand>
</feature>
<feature type="binding site" evidence="1">
    <location>
        <begin position="87"/>
        <end position="89"/>
    </location>
    <ligand>
        <name>ATP</name>
        <dbReference type="ChEBI" id="CHEBI:30616"/>
    </ligand>
</feature>
<feature type="binding site" evidence="1">
    <location>
        <position position="97"/>
    </location>
    <ligand>
        <name>ATP</name>
        <dbReference type="ChEBI" id="CHEBI:30616"/>
    </ligand>
</feature>
<feature type="binding site" evidence="1">
    <location>
        <begin position="122"/>
        <end position="128"/>
    </location>
    <ligand>
        <name>ATP</name>
        <dbReference type="ChEBI" id="CHEBI:30616"/>
    </ligand>
</feature>
<feature type="site" description="Transition state stabilizer" evidence="1">
    <location>
        <position position="16"/>
    </location>
</feature>
<evidence type="ECO:0000255" key="1">
    <source>
        <dbReference type="HAMAP-Rule" id="MF_00151"/>
    </source>
</evidence>
<sequence length="159" mass="17580">MIALYPGSFDPITFGHLDIIERASRLFSKVIVAVLKNPNKTPLFTPEQRQAQILLSVAHLKNVEVDTFSGLTVAYARQRGARVIVRGLRVLSDFDVELQMAHTNKLLAPELETLFLATASEHSFVSSSLVKEVAKLGGPIDHLVPPPVAQDLRERFPLT</sequence>
<proteinExistence type="inferred from homology"/>
<organism>
    <name type="scientific">Synechococcus sp. (strain JA-3-3Ab)</name>
    <name type="common">Cyanobacteria bacterium Yellowstone A-Prime</name>
    <dbReference type="NCBI Taxonomy" id="321327"/>
    <lineage>
        <taxon>Bacteria</taxon>
        <taxon>Bacillati</taxon>
        <taxon>Cyanobacteriota</taxon>
        <taxon>Cyanophyceae</taxon>
        <taxon>Synechococcales</taxon>
        <taxon>Synechococcaceae</taxon>
        <taxon>Synechococcus</taxon>
    </lineage>
</organism>
<comment type="function">
    <text evidence="1">Reversibly transfers an adenylyl group from ATP to 4'-phosphopantetheine, yielding dephospho-CoA (dPCoA) and pyrophosphate.</text>
</comment>
<comment type="catalytic activity">
    <reaction evidence="1">
        <text>(R)-4'-phosphopantetheine + ATP + H(+) = 3'-dephospho-CoA + diphosphate</text>
        <dbReference type="Rhea" id="RHEA:19801"/>
        <dbReference type="ChEBI" id="CHEBI:15378"/>
        <dbReference type="ChEBI" id="CHEBI:30616"/>
        <dbReference type="ChEBI" id="CHEBI:33019"/>
        <dbReference type="ChEBI" id="CHEBI:57328"/>
        <dbReference type="ChEBI" id="CHEBI:61723"/>
        <dbReference type="EC" id="2.7.7.3"/>
    </reaction>
</comment>
<comment type="cofactor">
    <cofactor evidence="1">
        <name>Mg(2+)</name>
        <dbReference type="ChEBI" id="CHEBI:18420"/>
    </cofactor>
</comment>
<comment type="pathway">
    <text evidence="1">Cofactor biosynthesis; coenzyme A biosynthesis; CoA from (R)-pantothenate: step 4/5.</text>
</comment>
<comment type="subunit">
    <text evidence="1">Homohexamer.</text>
</comment>
<comment type="subcellular location">
    <subcellularLocation>
        <location evidence="1">Cytoplasm</location>
    </subcellularLocation>
</comment>
<comment type="similarity">
    <text evidence="1">Belongs to the bacterial CoaD family.</text>
</comment>
<keyword id="KW-0067">ATP-binding</keyword>
<keyword id="KW-0173">Coenzyme A biosynthesis</keyword>
<keyword id="KW-0963">Cytoplasm</keyword>
<keyword id="KW-0460">Magnesium</keyword>
<keyword id="KW-0547">Nucleotide-binding</keyword>
<keyword id="KW-0548">Nucleotidyltransferase</keyword>
<keyword id="KW-0808">Transferase</keyword>
<reference key="1">
    <citation type="journal article" date="2007" name="ISME J.">
        <title>Population level functional diversity in a microbial community revealed by comparative genomic and metagenomic analyses.</title>
        <authorList>
            <person name="Bhaya D."/>
            <person name="Grossman A.R."/>
            <person name="Steunou A.-S."/>
            <person name="Khuri N."/>
            <person name="Cohan F.M."/>
            <person name="Hamamura N."/>
            <person name="Melendrez M.C."/>
            <person name="Bateson M.M."/>
            <person name="Ward D.M."/>
            <person name="Heidelberg J.F."/>
        </authorList>
    </citation>
    <scope>NUCLEOTIDE SEQUENCE [LARGE SCALE GENOMIC DNA]</scope>
    <source>
        <strain>JA-3-3Ab</strain>
    </source>
</reference>